<evidence type="ECO:0000255" key="1"/>
<evidence type="ECO:0000255" key="2">
    <source>
        <dbReference type="PROSITE-ProRule" id="PRU00521"/>
    </source>
</evidence>
<evidence type="ECO:0000269" key="3">
    <source>
    </source>
</evidence>
<evidence type="ECO:0000269" key="4">
    <source>
    </source>
</evidence>
<evidence type="ECO:0000269" key="5">
    <source ref="1"/>
</evidence>
<evidence type="ECO:0000305" key="6"/>
<reference key="1">
    <citation type="submission" date="2001-07" db="EMBL/GenBank/DDBJ databases">
        <title>Genome-wide discovery and analysis of human seven transmembrane helix receptor genes.</title>
        <authorList>
            <person name="Suwa M."/>
            <person name="Sato T."/>
            <person name="Okouchi I."/>
            <person name="Arita M."/>
            <person name="Futami K."/>
            <person name="Matsumoto S."/>
            <person name="Tsutsumi S."/>
            <person name="Aburatani H."/>
            <person name="Asai K."/>
            <person name="Akiyama Y."/>
        </authorList>
    </citation>
    <scope>NUCLEOTIDE SEQUENCE [GENOMIC DNA]</scope>
    <scope>VARIANTS ARG-52 AND TRP-153</scope>
</reference>
<reference key="2">
    <citation type="journal article" date="2006" name="Nature">
        <title>Human chromosome 11 DNA sequence and analysis including novel gene identification.</title>
        <authorList>
            <person name="Taylor T.D."/>
            <person name="Noguchi H."/>
            <person name="Totoki Y."/>
            <person name="Toyoda A."/>
            <person name="Kuroki Y."/>
            <person name="Dewar K."/>
            <person name="Lloyd C."/>
            <person name="Itoh T."/>
            <person name="Takeda T."/>
            <person name="Kim D.-W."/>
            <person name="She X."/>
            <person name="Barlow K.F."/>
            <person name="Bloom T."/>
            <person name="Bruford E."/>
            <person name="Chang J.L."/>
            <person name="Cuomo C.A."/>
            <person name="Eichler E."/>
            <person name="FitzGerald M.G."/>
            <person name="Jaffe D.B."/>
            <person name="LaButti K."/>
            <person name="Nicol R."/>
            <person name="Park H.-S."/>
            <person name="Seaman C."/>
            <person name="Sougnez C."/>
            <person name="Yang X."/>
            <person name="Zimmer A.R."/>
            <person name="Zody M.C."/>
            <person name="Birren B.W."/>
            <person name="Nusbaum C."/>
            <person name="Fujiyama A."/>
            <person name="Hattori M."/>
            <person name="Rogers J."/>
            <person name="Lander E.S."/>
            <person name="Sakaki Y."/>
        </authorList>
    </citation>
    <scope>NUCLEOTIDE SEQUENCE [LARGE SCALE GENOMIC DNA]</scope>
</reference>
<reference key="3">
    <citation type="journal article" date="2004" name="Genome Res.">
        <title>The status, quality, and expansion of the NIH full-length cDNA project: the Mammalian Gene Collection (MGC).</title>
        <authorList>
            <consortium name="The MGC Project Team"/>
        </authorList>
    </citation>
    <scope>NUCLEOTIDE SEQUENCE [LARGE SCALE MRNA]</scope>
    <scope>VARIANTS ARG-52 AND TRP-153</scope>
    <source>
        <tissue>Testis</tissue>
    </source>
</reference>
<reference key="4">
    <citation type="journal article" date="2004" name="Proc. Natl. Acad. Sci. U.S.A.">
        <title>The human olfactory receptor gene family.</title>
        <authorList>
            <person name="Malnic B."/>
            <person name="Godfrey P.A."/>
            <person name="Buck L.B."/>
        </authorList>
    </citation>
    <scope>IDENTIFICATION</scope>
    <scope>VARIANTS ARG-52 AND TRP-153</scope>
</reference>
<reference key="5">
    <citation type="journal article" date="2004" name="Proc. Natl. Acad. Sci. U.S.A.">
        <authorList>
            <person name="Malnic B."/>
            <person name="Godfrey P.A."/>
            <person name="Buck L.B."/>
        </authorList>
    </citation>
    <scope>ERRATUM OF PUBMED:14983052</scope>
</reference>
<proteinExistence type="evidence at transcript level"/>
<gene>
    <name type="primary">OR52K1</name>
</gene>
<keyword id="KW-1003">Cell membrane</keyword>
<keyword id="KW-1015">Disulfide bond</keyword>
<keyword id="KW-0297">G-protein coupled receptor</keyword>
<keyword id="KW-0325">Glycoprotein</keyword>
<keyword id="KW-0472">Membrane</keyword>
<keyword id="KW-0552">Olfaction</keyword>
<keyword id="KW-0675">Receptor</keyword>
<keyword id="KW-1185">Reference proteome</keyword>
<keyword id="KW-0716">Sensory transduction</keyword>
<keyword id="KW-0807">Transducer</keyword>
<keyword id="KW-0812">Transmembrane</keyword>
<keyword id="KW-1133">Transmembrane helix</keyword>
<dbReference type="EMBL" id="AB065790">
    <property type="protein sequence ID" value="BAC06009.1"/>
    <property type="molecule type" value="Genomic_DNA"/>
</dbReference>
<dbReference type="EMBL" id="AC010930">
    <property type="status" value="NOT_ANNOTATED_CDS"/>
    <property type="molecule type" value="Genomic_DNA"/>
</dbReference>
<dbReference type="EMBL" id="BC137056">
    <property type="protein sequence ID" value="AAI37057.1"/>
    <property type="molecule type" value="mRNA"/>
</dbReference>
<dbReference type="EMBL" id="BC137059">
    <property type="protein sequence ID" value="AAI37060.1"/>
    <property type="molecule type" value="mRNA"/>
</dbReference>
<dbReference type="EMBL" id="BK004257">
    <property type="protein sequence ID" value="DAA04655.1"/>
    <property type="molecule type" value="Genomic_DNA"/>
</dbReference>
<dbReference type="CCDS" id="CCDS31352.1"/>
<dbReference type="RefSeq" id="NP_001005171.2">
    <property type="nucleotide sequence ID" value="NM_001005171.3"/>
</dbReference>
<dbReference type="SMR" id="Q8NGK4"/>
<dbReference type="FunCoup" id="Q8NGK4">
    <property type="interactions" value="582"/>
</dbReference>
<dbReference type="STRING" id="9606.ENSP00000493011"/>
<dbReference type="GlyCosmos" id="Q8NGK4">
    <property type="glycosylation" value="1 site, No reported glycans"/>
</dbReference>
<dbReference type="GlyGen" id="Q8NGK4">
    <property type="glycosylation" value="1 site"/>
</dbReference>
<dbReference type="iPTMnet" id="Q8NGK4"/>
<dbReference type="PhosphoSitePlus" id="Q8NGK4"/>
<dbReference type="BioMuta" id="OR52K1"/>
<dbReference type="DMDM" id="296439250"/>
<dbReference type="MassIVE" id="Q8NGK4"/>
<dbReference type="PaxDb" id="9606-ENSP00000302422"/>
<dbReference type="ProteomicsDB" id="73540"/>
<dbReference type="Antibodypedia" id="57455">
    <property type="antibodies" value="40 antibodies from 15 providers"/>
</dbReference>
<dbReference type="DNASU" id="390036"/>
<dbReference type="Ensembl" id="ENST00000641528.1">
    <property type="protein sequence ID" value="ENSP00000493011.1"/>
    <property type="gene ID" value="ENSG00000196778.4"/>
</dbReference>
<dbReference type="GeneID" id="390036"/>
<dbReference type="KEGG" id="hsa:390036"/>
<dbReference type="MANE-Select" id="ENST00000641528.1">
    <property type="protein sequence ID" value="ENSP00000493011.1"/>
    <property type="RefSeq nucleotide sequence ID" value="NM_001005171.3"/>
    <property type="RefSeq protein sequence ID" value="NP_001005171.2"/>
</dbReference>
<dbReference type="UCSC" id="uc001lza.2">
    <property type="organism name" value="human"/>
</dbReference>
<dbReference type="AGR" id="HGNC:15222"/>
<dbReference type="CTD" id="390036"/>
<dbReference type="DisGeNET" id="390036"/>
<dbReference type="GeneCards" id="OR52K1"/>
<dbReference type="HGNC" id="HGNC:15222">
    <property type="gene designation" value="OR52K1"/>
</dbReference>
<dbReference type="HPA" id="ENSG00000196778">
    <property type="expression patterns" value="Not detected"/>
</dbReference>
<dbReference type="neXtProt" id="NX_Q8NGK4"/>
<dbReference type="OpenTargets" id="ENSG00000196778"/>
<dbReference type="PharmGKB" id="PA32417"/>
<dbReference type="VEuPathDB" id="HostDB:ENSG00000196778"/>
<dbReference type="eggNOG" id="ENOG502SHN8">
    <property type="taxonomic scope" value="Eukaryota"/>
</dbReference>
<dbReference type="GeneTree" id="ENSGT01130000278320"/>
<dbReference type="HOGENOM" id="CLU_012526_0_0_1"/>
<dbReference type="InParanoid" id="Q8NGK4"/>
<dbReference type="OMA" id="VIHRFGH"/>
<dbReference type="OrthoDB" id="5969463at2759"/>
<dbReference type="PAN-GO" id="Q8NGK4">
    <property type="GO annotations" value="0 GO annotations based on evolutionary models"/>
</dbReference>
<dbReference type="PhylomeDB" id="Q8NGK4"/>
<dbReference type="TreeFam" id="TF343679"/>
<dbReference type="PathwayCommons" id="Q8NGK4"/>
<dbReference type="Reactome" id="R-HSA-9752946">
    <property type="pathway name" value="Expression and translocation of olfactory receptors"/>
</dbReference>
<dbReference type="BioGRID-ORCS" id="390036">
    <property type="hits" value="6 hits in 737 CRISPR screens"/>
</dbReference>
<dbReference type="GeneWiki" id="OR52K1"/>
<dbReference type="GenomeRNAi" id="390036"/>
<dbReference type="Pharos" id="Q8NGK4">
    <property type="development level" value="Tdark"/>
</dbReference>
<dbReference type="PRO" id="PR:Q8NGK4"/>
<dbReference type="Proteomes" id="UP000005640">
    <property type="component" value="Chromosome 11"/>
</dbReference>
<dbReference type="RNAct" id="Q8NGK4">
    <property type="molecule type" value="protein"/>
</dbReference>
<dbReference type="Bgee" id="ENSG00000196778">
    <property type="expression patterns" value="Expressed in monocyte and 6 other cell types or tissues"/>
</dbReference>
<dbReference type="ExpressionAtlas" id="Q8NGK4">
    <property type="expression patterns" value="baseline and differential"/>
</dbReference>
<dbReference type="GO" id="GO:0005886">
    <property type="term" value="C:plasma membrane"/>
    <property type="evidence" value="ECO:0000318"/>
    <property type="project" value="GO_Central"/>
</dbReference>
<dbReference type="GO" id="GO:0004930">
    <property type="term" value="F:G protein-coupled receptor activity"/>
    <property type="evidence" value="ECO:0007669"/>
    <property type="project" value="UniProtKB-KW"/>
</dbReference>
<dbReference type="GO" id="GO:0004984">
    <property type="term" value="F:olfactory receptor activity"/>
    <property type="evidence" value="ECO:0000318"/>
    <property type="project" value="GO_Central"/>
</dbReference>
<dbReference type="CDD" id="cd15948">
    <property type="entry name" value="7tmA_OR52K-like"/>
    <property type="match status" value="1"/>
</dbReference>
<dbReference type="FunFam" id="1.20.1070.10:FF:000006">
    <property type="entry name" value="Olfactory receptor"/>
    <property type="match status" value="1"/>
</dbReference>
<dbReference type="Gene3D" id="1.20.1070.10">
    <property type="entry name" value="Rhodopsin 7-helix transmembrane proteins"/>
    <property type="match status" value="1"/>
</dbReference>
<dbReference type="InterPro" id="IPR000276">
    <property type="entry name" value="GPCR_Rhodpsn"/>
</dbReference>
<dbReference type="InterPro" id="IPR017452">
    <property type="entry name" value="GPCR_Rhodpsn_7TM"/>
</dbReference>
<dbReference type="InterPro" id="IPR000725">
    <property type="entry name" value="Olfact_rcpt"/>
</dbReference>
<dbReference type="InterPro" id="IPR050402">
    <property type="entry name" value="OR51/52/56-like"/>
</dbReference>
<dbReference type="PANTHER" id="PTHR26450:SF401">
    <property type="entry name" value="OLFACTORY RECEPTOR 52K1"/>
    <property type="match status" value="1"/>
</dbReference>
<dbReference type="PANTHER" id="PTHR26450">
    <property type="entry name" value="OLFACTORY RECEPTOR 56B1-RELATED"/>
    <property type="match status" value="1"/>
</dbReference>
<dbReference type="Pfam" id="PF13853">
    <property type="entry name" value="7tm_4"/>
    <property type="match status" value="1"/>
</dbReference>
<dbReference type="PRINTS" id="PR00237">
    <property type="entry name" value="GPCRRHODOPSN"/>
</dbReference>
<dbReference type="PRINTS" id="PR00245">
    <property type="entry name" value="OLFACTORYR"/>
</dbReference>
<dbReference type="SUPFAM" id="SSF81321">
    <property type="entry name" value="Family A G protein-coupled receptor-like"/>
    <property type="match status" value="1"/>
</dbReference>
<dbReference type="PROSITE" id="PS00237">
    <property type="entry name" value="G_PROTEIN_RECEP_F1_1"/>
    <property type="match status" value="1"/>
</dbReference>
<dbReference type="PROSITE" id="PS50262">
    <property type="entry name" value="G_PROTEIN_RECEP_F1_2"/>
    <property type="match status" value="1"/>
</dbReference>
<sequence length="314" mass="35231">MLPSNITSTHPAVFLLVGIPGLEHLHAWISIPFCFAYTLALLGNCTLLFIIQADAALHEPMYLFLAMLATIDLVLSSTTLPKMLAIFWFRDQEINFFACLVQMFFLHSFSIMESAVLLAMAFDRYVAICKPLHYTTVLTGSLITKIGMAAVARAVTLMTPLPFLLRRFHYCRGPVIAHCYCEHMAVVRLACGDTSFNNIYGIAVAMFIVVLDLLFVILSYVFILQAVLQLASQEARYKAFGTCVSHIGAILSTYTPVVISSVMHRVARHAAPRVHILLAIFYLLFPPMVNPIIYGVKTKQIREYVLSLFQRKNM</sequence>
<accession>Q8NGK4</accession>
<accession>B9EH54</accession>
<accession>Q6IFK5</accession>
<feature type="chain" id="PRO_0000150781" description="Olfactory receptor 52K1">
    <location>
        <begin position="1"/>
        <end position="314"/>
    </location>
</feature>
<feature type="topological domain" description="Extracellular" evidence="1">
    <location>
        <begin position="1"/>
        <end position="27"/>
    </location>
</feature>
<feature type="transmembrane region" description="Helical; Name=1" evidence="1">
    <location>
        <begin position="28"/>
        <end position="48"/>
    </location>
</feature>
<feature type="topological domain" description="Cytoplasmic" evidence="1">
    <location>
        <begin position="49"/>
        <end position="56"/>
    </location>
</feature>
<feature type="transmembrane region" description="Helical; Name=2" evidence="1">
    <location>
        <begin position="57"/>
        <end position="77"/>
    </location>
</feature>
<feature type="topological domain" description="Extracellular" evidence="1">
    <location>
        <begin position="78"/>
        <end position="101"/>
    </location>
</feature>
<feature type="transmembrane region" description="Helical; Name=3" evidence="1">
    <location>
        <begin position="102"/>
        <end position="122"/>
    </location>
</feature>
<feature type="topological domain" description="Cytoplasmic" evidence="1">
    <location>
        <begin position="123"/>
        <end position="141"/>
    </location>
</feature>
<feature type="transmembrane region" description="Helical; Name=4" evidence="1">
    <location>
        <begin position="142"/>
        <end position="162"/>
    </location>
</feature>
<feature type="topological domain" description="Extracellular" evidence="1">
    <location>
        <begin position="163"/>
        <end position="198"/>
    </location>
</feature>
<feature type="transmembrane region" description="Helical; Name=5" evidence="1">
    <location>
        <begin position="199"/>
        <end position="219"/>
    </location>
</feature>
<feature type="topological domain" description="Cytoplasmic" evidence="1">
    <location>
        <begin position="220"/>
        <end position="239"/>
    </location>
</feature>
<feature type="transmembrane region" description="Helical; Name=6" evidence="1">
    <location>
        <begin position="240"/>
        <end position="260"/>
    </location>
</feature>
<feature type="topological domain" description="Extracellular" evidence="1">
    <location>
        <begin position="261"/>
        <end position="275"/>
    </location>
</feature>
<feature type="transmembrane region" description="Helical; Name=7" evidence="1">
    <location>
        <begin position="276"/>
        <end position="296"/>
    </location>
</feature>
<feature type="topological domain" description="Cytoplasmic" evidence="1">
    <location>
        <begin position="297"/>
        <end position="314"/>
    </location>
</feature>
<feature type="glycosylation site" description="N-linked (GlcNAc...) asparagine" evidence="1">
    <location>
        <position position="5"/>
    </location>
</feature>
<feature type="disulfide bond" evidence="2">
    <location>
        <begin position="99"/>
        <end position="191"/>
    </location>
</feature>
<feature type="sequence variant" id="VAR_060038" description="In dbSNP:rs96489." evidence="3 4 5">
    <original>Q</original>
    <variation>R</variation>
    <location>
        <position position="52"/>
    </location>
</feature>
<feature type="sequence variant" id="VAR_060039" description="In dbSNP:rs331510." evidence="3 4 5">
    <original>R</original>
    <variation>W</variation>
    <location>
        <position position="153"/>
    </location>
</feature>
<organism>
    <name type="scientific">Homo sapiens</name>
    <name type="common">Human</name>
    <dbReference type="NCBI Taxonomy" id="9606"/>
    <lineage>
        <taxon>Eukaryota</taxon>
        <taxon>Metazoa</taxon>
        <taxon>Chordata</taxon>
        <taxon>Craniata</taxon>
        <taxon>Vertebrata</taxon>
        <taxon>Euteleostomi</taxon>
        <taxon>Mammalia</taxon>
        <taxon>Eutheria</taxon>
        <taxon>Euarchontoglires</taxon>
        <taxon>Primates</taxon>
        <taxon>Haplorrhini</taxon>
        <taxon>Catarrhini</taxon>
        <taxon>Hominidae</taxon>
        <taxon>Homo</taxon>
    </lineage>
</organism>
<protein>
    <recommendedName>
        <fullName>Olfactory receptor 52K1</fullName>
    </recommendedName>
    <alternativeName>
        <fullName>Olfactory receptor OR11-8</fullName>
    </alternativeName>
</protein>
<comment type="function">
    <text evidence="6">Odorant receptor.</text>
</comment>
<comment type="subcellular location">
    <subcellularLocation>
        <location>Cell membrane</location>
        <topology>Multi-pass membrane protein</topology>
    </subcellularLocation>
</comment>
<comment type="similarity">
    <text evidence="2">Belongs to the G-protein coupled receptor 1 family.</text>
</comment>
<comment type="online information" name="Human Olfactory Receptor Data Exploratorium (HORDE)">
    <link uri="http://genome.weizmann.ac.il/horde/card/index/symbol:OR52K1"/>
</comment>
<name>O52K1_HUMAN</name>